<dbReference type="EC" id="4.2.1.104" evidence="1"/>
<dbReference type="EMBL" id="CP000116">
    <property type="protein sequence ID" value="AAZ97894.1"/>
    <property type="molecule type" value="Genomic_DNA"/>
</dbReference>
<dbReference type="RefSeq" id="WP_011312453.1">
    <property type="nucleotide sequence ID" value="NC_007404.1"/>
</dbReference>
<dbReference type="SMR" id="Q3SHJ2"/>
<dbReference type="STRING" id="292415.Tbd_1941"/>
<dbReference type="KEGG" id="tbd:Tbd_1941"/>
<dbReference type="eggNOG" id="COG1513">
    <property type="taxonomic scope" value="Bacteria"/>
</dbReference>
<dbReference type="HOGENOM" id="CLU_103452_1_1_4"/>
<dbReference type="OrthoDB" id="9785870at2"/>
<dbReference type="Proteomes" id="UP000008291">
    <property type="component" value="Chromosome"/>
</dbReference>
<dbReference type="GO" id="GO:0008824">
    <property type="term" value="F:cyanate hydratase activity"/>
    <property type="evidence" value="ECO:0007669"/>
    <property type="project" value="UniProtKB-UniRule"/>
</dbReference>
<dbReference type="GO" id="GO:0003677">
    <property type="term" value="F:DNA binding"/>
    <property type="evidence" value="ECO:0007669"/>
    <property type="project" value="InterPro"/>
</dbReference>
<dbReference type="GO" id="GO:0009439">
    <property type="term" value="P:cyanate metabolic process"/>
    <property type="evidence" value="ECO:0007669"/>
    <property type="project" value="UniProtKB-UniRule"/>
</dbReference>
<dbReference type="CDD" id="cd00559">
    <property type="entry name" value="Cyanase_C"/>
    <property type="match status" value="1"/>
</dbReference>
<dbReference type="Gene3D" id="3.30.1160.10">
    <property type="entry name" value="Cyanate lyase, C-terminal domain"/>
    <property type="match status" value="1"/>
</dbReference>
<dbReference type="Gene3D" id="1.10.260.40">
    <property type="entry name" value="lambda repressor-like DNA-binding domains"/>
    <property type="match status" value="1"/>
</dbReference>
<dbReference type="HAMAP" id="MF_00535">
    <property type="entry name" value="Cyanate_hydrat"/>
    <property type="match status" value="1"/>
</dbReference>
<dbReference type="InterPro" id="IPR008076">
    <property type="entry name" value="Cyanase"/>
</dbReference>
<dbReference type="InterPro" id="IPR003712">
    <property type="entry name" value="Cyanate_lyase_C"/>
</dbReference>
<dbReference type="InterPro" id="IPR036581">
    <property type="entry name" value="Cyanate_lyase_C_sf"/>
</dbReference>
<dbReference type="InterPro" id="IPR048564">
    <property type="entry name" value="CYNS_N"/>
</dbReference>
<dbReference type="InterPro" id="IPR010982">
    <property type="entry name" value="Lambda_DNA-bd_dom_sf"/>
</dbReference>
<dbReference type="NCBIfam" id="TIGR00673">
    <property type="entry name" value="cynS"/>
    <property type="match status" value="1"/>
</dbReference>
<dbReference type="NCBIfam" id="NF002773">
    <property type="entry name" value="PRK02866.1"/>
    <property type="match status" value="1"/>
</dbReference>
<dbReference type="PANTHER" id="PTHR34186">
    <property type="entry name" value="CYANATE HYDRATASE"/>
    <property type="match status" value="1"/>
</dbReference>
<dbReference type="PANTHER" id="PTHR34186:SF2">
    <property type="entry name" value="CYANATE HYDRATASE"/>
    <property type="match status" value="1"/>
</dbReference>
<dbReference type="Pfam" id="PF02560">
    <property type="entry name" value="Cyanate_lyase"/>
    <property type="match status" value="1"/>
</dbReference>
<dbReference type="Pfam" id="PF21291">
    <property type="entry name" value="CYNS_N"/>
    <property type="match status" value="1"/>
</dbReference>
<dbReference type="PIRSF" id="PIRSF001263">
    <property type="entry name" value="Cyanate_hydratas"/>
    <property type="match status" value="1"/>
</dbReference>
<dbReference type="PRINTS" id="PR01693">
    <property type="entry name" value="CYANASE"/>
</dbReference>
<dbReference type="SMART" id="SM01116">
    <property type="entry name" value="Cyanate_lyase"/>
    <property type="match status" value="1"/>
</dbReference>
<dbReference type="SUPFAM" id="SSF55234">
    <property type="entry name" value="Cyanase C-terminal domain"/>
    <property type="match status" value="1"/>
</dbReference>
<dbReference type="SUPFAM" id="SSF47413">
    <property type="entry name" value="lambda repressor-like DNA-binding domains"/>
    <property type="match status" value="1"/>
</dbReference>
<organism>
    <name type="scientific">Thiobacillus denitrificans (strain ATCC 25259 / T1)</name>
    <dbReference type="NCBI Taxonomy" id="292415"/>
    <lineage>
        <taxon>Bacteria</taxon>
        <taxon>Pseudomonadati</taxon>
        <taxon>Pseudomonadota</taxon>
        <taxon>Betaproteobacteria</taxon>
        <taxon>Nitrosomonadales</taxon>
        <taxon>Thiobacillaceae</taxon>
        <taxon>Thiobacillus</taxon>
    </lineage>
</organism>
<keyword id="KW-0456">Lyase</keyword>
<keyword id="KW-1185">Reference proteome</keyword>
<accession>Q3SHJ2</accession>
<reference key="1">
    <citation type="journal article" date="2006" name="J. Bacteriol.">
        <title>The genome sequence of the obligately chemolithoautotrophic, facultatively anaerobic bacterium Thiobacillus denitrificans.</title>
        <authorList>
            <person name="Beller H.R."/>
            <person name="Chain P.S."/>
            <person name="Letain T.E."/>
            <person name="Chakicherla A."/>
            <person name="Larimer F.W."/>
            <person name="Richardson P.M."/>
            <person name="Coleman M.A."/>
            <person name="Wood A.P."/>
            <person name="Kelly D.P."/>
        </authorList>
    </citation>
    <scope>NUCLEOTIDE SEQUENCE [LARGE SCALE GENOMIC DNA]</scope>
    <source>
        <strain>ATCC 25259 / T1</strain>
    </source>
</reference>
<protein>
    <recommendedName>
        <fullName evidence="1">Cyanate hydratase</fullName>
        <shortName evidence="1">Cyanase</shortName>
        <ecNumber evidence="1">4.2.1.104</ecNumber>
    </recommendedName>
    <alternativeName>
        <fullName evidence="1">Cyanate hydrolase</fullName>
    </alternativeName>
    <alternativeName>
        <fullName evidence="1">Cyanate lyase</fullName>
    </alternativeName>
</protein>
<gene>
    <name evidence="1" type="primary">cynS</name>
    <name type="ordered locus">Tbd_1941</name>
</gene>
<name>CYNS_THIDA</name>
<comment type="function">
    <text evidence="1">Catalyzes the reaction of cyanate with bicarbonate to produce ammonia and carbon dioxide.</text>
</comment>
<comment type="catalytic activity">
    <reaction evidence="1">
        <text>cyanate + hydrogencarbonate + 3 H(+) = NH4(+) + 2 CO2</text>
        <dbReference type="Rhea" id="RHEA:11120"/>
        <dbReference type="ChEBI" id="CHEBI:15378"/>
        <dbReference type="ChEBI" id="CHEBI:16526"/>
        <dbReference type="ChEBI" id="CHEBI:17544"/>
        <dbReference type="ChEBI" id="CHEBI:28938"/>
        <dbReference type="ChEBI" id="CHEBI:29195"/>
        <dbReference type="EC" id="4.2.1.104"/>
    </reaction>
</comment>
<comment type="similarity">
    <text evidence="1">Belongs to the cyanase family.</text>
</comment>
<feature type="chain" id="PRO_1000072539" description="Cyanate hydratase">
    <location>
        <begin position="1"/>
        <end position="147"/>
    </location>
</feature>
<feature type="active site" evidence="1">
    <location>
        <position position="88"/>
    </location>
</feature>
<feature type="active site" evidence="1">
    <location>
        <position position="91"/>
    </location>
</feature>
<feature type="active site" evidence="1">
    <location>
        <position position="114"/>
    </location>
</feature>
<evidence type="ECO:0000255" key="1">
    <source>
        <dbReference type="HAMAP-Rule" id="MF_00535"/>
    </source>
</evidence>
<sequence length="147" mass="16305">MTRDQVTQLVLDSKRRKQLKWAQLAEATGQSKEWTAAALLGQMTLSAAQAGAVGRLLDLPADAVDGLQVVPYKGSLPTAVPTDPLIYRFYELINVYGTSIKELIHEEFGDGIMSAIDFSMDISREADPKGDRVRIVLNGKFLPYRMY</sequence>
<proteinExistence type="inferred from homology"/>